<protein>
    <recommendedName>
        <fullName evidence="1">GMP synthase [glutamine-hydrolyzing]</fullName>
        <ecNumber evidence="1">6.3.5.2</ecNumber>
    </recommendedName>
    <alternativeName>
        <fullName evidence="1">GMP synthetase</fullName>
    </alternativeName>
    <alternativeName>
        <fullName evidence="1">Glutamine amidotransferase</fullName>
    </alternativeName>
</protein>
<comment type="function">
    <text evidence="1">Catalyzes the synthesis of GMP from XMP.</text>
</comment>
<comment type="catalytic activity">
    <reaction evidence="1">
        <text>XMP + L-glutamine + ATP + H2O = GMP + L-glutamate + AMP + diphosphate + 2 H(+)</text>
        <dbReference type="Rhea" id="RHEA:11680"/>
        <dbReference type="ChEBI" id="CHEBI:15377"/>
        <dbReference type="ChEBI" id="CHEBI:15378"/>
        <dbReference type="ChEBI" id="CHEBI:29985"/>
        <dbReference type="ChEBI" id="CHEBI:30616"/>
        <dbReference type="ChEBI" id="CHEBI:33019"/>
        <dbReference type="ChEBI" id="CHEBI:57464"/>
        <dbReference type="ChEBI" id="CHEBI:58115"/>
        <dbReference type="ChEBI" id="CHEBI:58359"/>
        <dbReference type="ChEBI" id="CHEBI:456215"/>
        <dbReference type="EC" id="6.3.5.2"/>
    </reaction>
</comment>
<comment type="pathway">
    <text evidence="1">Purine metabolism; GMP biosynthesis; GMP from XMP (L-Gln route): step 1/1.</text>
</comment>
<comment type="subunit">
    <text evidence="1">Homodimer.</text>
</comment>
<evidence type="ECO:0000255" key="1">
    <source>
        <dbReference type="HAMAP-Rule" id="MF_00344"/>
    </source>
</evidence>
<sequence>MSDIHEHKILILDFGSQYTQLIARRIREIGVYCELWAWDVTEAQIREFAPNGIILAGGPESVTADNSPRAPEYVFNAGVPVLGICYGMQTMSEQLGGKVIQGVGEGEFGYAQIEMLAQSALFKDIEDAVSADGKSLLDVWMSHGDKVSAIPEGFVAVAKTDTCPFAAMSCEEKRFYGVQFHPEVTHTRQGMRMLSHFALDICGCAANWKPSSIIEDAIERLKKQVGDDEVILGLSGGVDSSVVAMLLHRAIGKKLTCVFVDNGLLRLNEAKQVMEMFGDHFGLNIVHVDAENRFLDALKGEADPEAKRKIIGRVFVEIFDEEAKKCVNAKWLAQGTIYPDVIESAGSATGKAHVIKSHHNVGGLPDDMELGLVEPLRELFKDEVRKIGLELGLPYNMLYRHPFPGPGLGVRVLGEVKKEYCDLLRRADAIFIEELHKADLYNKVSQAFTVFLPVRSVGVMGDGRKYDWVVSLRAVETIDFMTAHWAHLPYDFLGRVSNRIINEIDGISRVVYDISGKPPATIEWE</sequence>
<reference key="1">
    <citation type="submission" date="2006-09" db="EMBL/GenBank/DDBJ databases">
        <title>Complete sequence of chromosome 1 of Shewanella sp. ANA-3.</title>
        <authorList>
            <person name="Copeland A."/>
            <person name="Lucas S."/>
            <person name="Lapidus A."/>
            <person name="Barry K."/>
            <person name="Detter J.C."/>
            <person name="Glavina del Rio T."/>
            <person name="Hammon N."/>
            <person name="Israni S."/>
            <person name="Dalin E."/>
            <person name="Tice H."/>
            <person name="Pitluck S."/>
            <person name="Chertkov O."/>
            <person name="Brettin T."/>
            <person name="Bruce D."/>
            <person name="Han C."/>
            <person name="Tapia R."/>
            <person name="Gilna P."/>
            <person name="Schmutz J."/>
            <person name="Larimer F."/>
            <person name="Land M."/>
            <person name="Hauser L."/>
            <person name="Kyrpides N."/>
            <person name="Kim E."/>
            <person name="Newman D."/>
            <person name="Salticov C."/>
            <person name="Konstantinidis K."/>
            <person name="Klappenback J."/>
            <person name="Tiedje J."/>
            <person name="Richardson P."/>
        </authorList>
    </citation>
    <scope>NUCLEOTIDE SEQUENCE [LARGE SCALE GENOMIC DNA]</scope>
    <source>
        <strain>ANA-3</strain>
    </source>
</reference>
<name>GUAA_SHESA</name>
<feature type="chain" id="PRO_1000120408" description="GMP synthase [glutamine-hydrolyzing]">
    <location>
        <begin position="1"/>
        <end position="525"/>
    </location>
</feature>
<feature type="domain" description="Glutamine amidotransferase type-1" evidence="1">
    <location>
        <begin position="8"/>
        <end position="207"/>
    </location>
</feature>
<feature type="domain" description="GMPS ATP-PPase" evidence="1">
    <location>
        <begin position="208"/>
        <end position="400"/>
    </location>
</feature>
<feature type="active site" description="Nucleophile" evidence="1">
    <location>
        <position position="85"/>
    </location>
</feature>
<feature type="active site" evidence="1">
    <location>
        <position position="181"/>
    </location>
</feature>
<feature type="active site" evidence="1">
    <location>
        <position position="183"/>
    </location>
</feature>
<feature type="binding site" evidence="1">
    <location>
        <begin position="235"/>
        <end position="241"/>
    </location>
    <ligand>
        <name>ATP</name>
        <dbReference type="ChEBI" id="CHEBI:30616"/>
    </ligand>
</feature>
<accession>A0KUK2</accession>
<gene>
    <name evidence="1" type="primary">guaA</name>
    <name type="ordered locus">Shewana3_1236</name>
</gene>
<organism>
    <name type="scientific">Shewanella sp. (strain ANA-3)</name>
    <dbReference type="NCBI Taxonomy" id="94122"/>
    <lineage>
        <taxon>Bacteria</taxon>
        <taxon>Pseudomonadati</taxon>
        <taxon>Pseudomonadota</taxon>
        <taxon>Gammaproteobacteria</taxon>
        <taxon>Alteromonadales</taxon>
        <taxon>Shewanellaceae</taxon>
        <taxon>Shewanella</taxon>
    </lineage>
</organism>
<proteinExistence type="inferred from homology"/>
<keyword id="KW-0067">ATP-binding</keyword>
<keyword id="KW-0315">Glutamine amidotransferase</keyword>
<keyword id="KW-0332">GMP biosynthesis</keyword>
<keyword id="KW-0436">Ligase</keyword>
<keyword id="KW-0547">Nucleotide-binding</keyword>
<keyword id="KW-0658">Purine biosynthesis</keyword>
<dbReference type="EC" id="6.3.5.2" evidence="1"/>
<dbReference type="EMBL" id="CP000469">
    <property type="protein sequence ID" value="ABK47471.1"/>
    <property type="molecule type" value="Genomic_DNA"/>
</dbReference>
<dbReference type="RefSeq" id="WP_011622023.1">
    <property type="nucleotide sequence ID" value="NC_008577.1"/>
</dbReference>
<dbReference type="SMR" id="A0KUK2"/>
<dbReference type="STRING" id="94122.Shewana3_1236"/>
<dbReference type="KEGG" id="shn:Shewana3_1236"/>
<dbReference type="eggNOG" id="COG0518">
    <property type="taxonomic scope" value="Bacteria"/>
</dbReference>
<dbReference type="eggNOG" id="COG0519">
    <property type="taxonomic scope" value="Bacteria"/>
</dbReference>
<dbReference type="HOGENOM" id="CLU_014340_0_5_6"/>
<dbReference type="OrthoDB" id="9802219at2"/>
<dbReference type="UniPathway" id="UPA00189">
    <property type="reaction ID" value="UER00296"/>
</dbReference>
<dbReference type="Proteomes" id="UP000002589">
    <property type="component" value="Chromosome"/>
</dbReference>
<dbReference type="GO" id="GO:0005829">
    <property type="term" value="C:cytosol"/>
    <property type="evidence" value="ECO:0007669"/>
    <property type="project" value="TreeGrafter"/>
</dbReference>
<dbReference type="GO" id="GO:0005524">
    <property type="term" value="F:ATP binding"/>
    <property type="evidence" value="ECO:0007669"/>
    <property type="project" value="UniProtKB-UniRule"/>
</dbReference>
<dbReference type="GO" id="GO:0003921">
    <property type="term" value="F:GMP synthase activity"/>
    <property type="evidence" value="ECO:0007669"/>
    <property type="project" value="InterPro"/>
</dbReference>
<dbReference type="CDD" id="cd01742">
    <property type="entry name" value="GATase1_GMP_Synthase"/>
    <property type="match status" value="1"/>
</dbReference>
<dbReference type="CDD" id="cd01997">
    <property type="entry name" value="GMP_synthase_C"/>
    <property type="match status" value="1"/>
</dbReference>
<dbReference type="FunFam" id="3.30.300.10:FF:000002">
    <property type="entry name" value="GMP synthase [glutamine-hydrolyzing]"/>
    <property type="match status" value="1"/>
</dbReference>
<dbReference type="FunFam" id="3.40.50.620:FF:000001">
    <property type="entry name" value="GMP synthase [glutamine-hydrolyzing]"/>
    <property type="match status" value="1"/>
</dbReference>
<dbReference type="FunFam" id="3.40.50.880:FF:000001">
    <property type="entry name" value="GMP synthase [glutamine-hydrolyzing]"/>
    <property type="match status" value="1"/>
</dbReference>
<dbReference type="Gene3D" id="3.30.300.10">
    <property type="match status" value="1"/>
</dbReference>
<dbReference type="Gene3D" id="3.40.50.880">
    <property type="match status" value="1"/>
</dbReference>
<dbReference type="Gene3D" id="3.40.50.620">
    <property type="entry name" value="HUPs"/>
    <property type="match status" value="1"/>
</dbReference>
<dbReference type="HAMAP" id="MF_00344">
    <property type="entry name" value="GMP_synthase"/>
    <property type="match status" value="1"/>
</dbReference>
<dbReference type="InterPro" id="IPR029062">
    <property type="entry name" value="Class_I_gatase-like"/>
</dbReference>
<dbReference type="InterPro" id="IPR017926">
    <property type="entry name" value="GATASE"/>
</dbReference>
<dbReference type="InterPro" id="IPR001674">
    <property type="entry name" value="GMP_synth_C"/>
</dbReference>
<dbReference type="InterPro" id="IPR004739">
    <property type="entry name" value="GMP_synth_GATase"/>
</dbReference>
<dbReference type="InterPro" id="IPR022955">
    <property type="entry name" value="GMP_synthase"/>
</dbReference>
<dbReference type="InterPro" id="IPR025777">
    <property type="entry name" value="GMPS_ATP_PPase_dom"/>
</dbReference>
<dbReference type="InterPro" id="IPR022310">
    <property type="entry name" value="NAD/GMP_synthase"/>
</dbReference>
<dbReference type="InterPro" id="IPR014729">
    <property type="entry name" value="Rossmann-like_a/b/a_fold"/>
</dbReference>
<dbReference type="NCBIfam" id="TIGR00884">
    <property type="entry name" value="guaA_Cterm"/>
    <property type="match status" value="1"/>
</dbReference>
<dbReference type="NCBIfam" id="TIGR00888">
    <property type="entry name" value="guaA_Nterm"/>
    <property type="match status" value="1"/>
</dbReference>
<dbReference type="NCBIfam" id="NF000848">
    <property type="entry name" value="PRK00074.1"/>
    <property type="match status" value="1"/>
</dbReference>
<dbReference type="PANTHER" id="PTHR11922:SF2">
    <property type="entry name" value="GMP SYNTHASE [GLUTAMINE-HYDROLYZING]"/>
    <property type="match status" value="1"/>
</dbReference>
<dbReference type="PANTHER" id="PTHR11922">
    <property type="entry name" value="GMP SYNTHASE-RELATED"/>
    <property type="match status" value="1"/>
</dbReference>
<dbReference type="Pfam" id="PF00117">
    <property type="entry name" value="GATase"/>
    <property type="match status" value="1"/>
</dbReference>
<dbReference type="Pfam" id="PF00958">
    <property type="entry name" value="GMP_synt_C"/>
    <property type="match status" value="1"/>
</dbReference>
<dbReference type="Pfam" id="PF02540">
    <property type="entry name" value="NAD_synthase"/>
    <property type="match status" value="1"/>
</dbReference>
<dbReference type="PRINTS" id="PR00097">
    <property type="entry name" value="ANTSNTHASEII"/>
</dbReference>
<dbReference type="PRINTS" id="PR00099">
    <property type="entry name" value="CPSGATASE"/>
</dbReference>
<dbReference type="PRINTS" id="PR00096">
    <property type="entry name" value="GATASE"/>
</dbReference>
<dbReference type="SUPFAM" id="SSF52402">
    <property type="entry name" value="Adenine nucleotide alpha hydrolases-like"/>
    <property type="match status" value="1"/>
</dbReference>
<dbReference type="SUPFAM" id="SSF52317">
    <property type="entry name" value="Class I glutamine amidotransferase-like"/>
    <property type="match status" value="1"/>
</dbReference>
<dbReference type="SUPFAM" id="SSF54810">
    <property type="entry name" value="GMP synthetase C-terminal dimerisation domain"/>
    <property type="match status" value="1"/>
</dbReference>
<dbReference type="PROSITE" id="PS51273">
    <property type="entry name" value="GATASE_TYPE_1"/>
    <property type="match status" value="1"/>
</dbReference>
<dbReference type="PROSITE" id="PS51553">
    <property type="entry name" value="GMPS_ATP_PPASE"/>
    <property type="match status" value="1"/>
</dbReference>